<accession>Q2FWY8</accession>
<keyword id="KW-0067">ATP-binding</keyword>
<keyword id="KW-0436">Ligase</keyword>
<keyword id="KW-0547">Nucleotide-binding</keyword>
<keyword id="KW-0648">Protein biosynthesis</keyword>
<keyword id="KW-1185">Reference proteome</keyword>
<dbReference type="EC" id="6.3.5.-" evidence="1"/>
<dbReference type="EMBL" id="CP000253">
    <property type="protein sequence ID" value="ABD31168.1"/>
    <property type="molecule type" value="Genomic_DNA"/>
</dbReference>
<dbReference type="RefSeq" id="WP_000170162.1">
    <property type="nucleotide sequence ID" value="NZ_LS483365.1"/>
</dbReference>
<dbReference type="RefSeq" id="YP_500610.1">
    <property type="nucleotide sequence ID" value="NC_007795.1"/>
</dbReference>
<dbReference type="SMR" id="Q2FWY8"/>
<dbReference type="STRING" id="93061.SAOUHSC_02118"/>
<dbReference type="PaxDb" id="1280-SAXN108_2000"/>
<dbReference type="GeneID" id="3921190"/>
<dbReference type="GeneID" id="98346286"/>
<dbReference type="KEGG" id="sao:SAOUHSC_02118"/>
<dbReference type="PATRIC" id="fig|93061.5.peg.1922"/>
<dbReference type="eggNOG" id="COG0721">
    <property type="taxonomic scope" value="Bacteria"/>
</dbReference>
<dbReference type="HOGENOM" id="CLU_105899_1_2_9"/>
<dbReference type="OrthoDB" id="9813938at2"/>
<dbReference type="PRO" id="PR:Q2FWY8"/>
<dbReference type="Proteomes" id="UP000008816">
    <property type="component" value="Chromosome"/>
</dbReference>
<dbReference type="GO" id="GO:0050566">
    <property type="term" value="F:asparaginyl-tRNA synthase (glutamine-hydrolyzing) activity"/>
    <property type="evidence" value="ECO:0007669"/>
    <property type="project" value="RHEA"/>
</dbReference>
<dbReference type="GO" id="GO:0005524">
    <property type="term" value="F:ATP binding"/>
    <property type="evidence" value="ECO:0007669"/>
    <property type="project" value="UniProtKB-KW"/>
</dbReference>
<dbReference type="GO" id="GO:0050567">
    <property type="term" value="F:glutaminyl-tRNA synthase (glutamine-hydrolyzing) activity"/>
    <property type="evidence" value="ECO:0007669"/>
    <property type="project" value="UniProtKB-UniRule"/>
</dbReference>
<dbReference type="GO" id="GO:0070681">
    <property type="term" value="P:glutaminyl-tRNAGln biosynthesis via transamidation"/>
    <property type="evidence" value="ECO:0000318"/>
    <property type="project" value="GO_Central"/>
</dbReference>
<dbReference type="GO" id="GO:0006450">
    <property type="term" value="P:regulation of translational fidelity"/>
    <property type="evidence" value="ECO:0007669"/>
    <property type="project" value="InterPro"/>
</dbReference>
<dbReference type="GO" id="GO:0006412">
    <property type="term" value="P:translation"/>
    <property type="evidence" value="ECO:0007669"/>
    <property type="project" value="UniProtKB-UniRule"/>
</dbReference>
<dbReference type="Gene3D" id="1.10.20.60">
    <property type="entry name" value="Glu-tRNAGln amidotransferase C subunit, N-terminal domain"/>
    <property type="match status" value="1"/>
</dbReference>
<dbReference type="HAMAP" id="MF_00122">
    <property type="entry name" value="GatC"/>
    <property type="match status" value="1"/>
</dbReference>
<dbReference type="InterPro" id="IPR036113">
    <property type="entry name" value="Asp/Glu-ADT_sf_sub_c"/>
</dbReference>
<dbReference type="InterPro" id="IPR003837">
    <property type="entry name" value="GatC"/>
</dbReference>
<dbReference type="NCBIfam" id="TIGR00135">
    <property type="entry name" value="gatC"/>
    <property type="match status" value="1"/>
</dbReference>
<dbReference type="PANTHER" id="PTHR15004">
    <property type="entry name" value="GLUTAMYL-TRNA(GLN) AMIDOTRANSFERASE SUBUNIT C, MITOCHONDRIAL"/>
    <property type="match status" value="1"/>
</dbReference>
<dbReference type="PANTHER" id="PTHR15004:SF0">
    <property type="entry name" value="GLUTAMYL-TRNA(GLN) AMIDOTRANSFERASE SUBUNIT C, MITOCHONDRIAL"/>
    <property type="match status" value="1"/>
</dbReference>
<dbReference type="Pfam" id="PF02686">
    <property type="entry name" value="GatC"/>
    <property type="match status" value="1"/>
</dbReference>
<dbReference type="SUPFAM" id="SSF141000">
    <property type="entry name" value="Glu-tRNAGln amidotransferase C subunit"/>
    <property type="match status" value="1"/>
</dbReference>
<gene>
    <name evidence="1" type="primary">gatC</name>
    <name type="ordered locus">SAOUHSC_02118</name>
</gene>
<name>GATC_STAA8</name>
<reference key="1">
    <citation type="book" date="2006" name="Gram positive pathogens, 2nd edition">
        <title>The Staphylococcus aureus NCTC 8325 genome.</title>
        <editorList>
            <person name="Fischetti V."/>
            <person name="Novick R."/>
            <person name="Ferretti J."/>
            <person name="Portnoy D."/>
            <person name="Rood J."/>
        </editorList>
        <authorList>
            <person name="Gillaspy A.F."/>
            <person name="Worrell V."/>
            <person name="Orvis J."/>
            <person name="Roe B.A."/>
            <person name="Dyer D.W."/>
            <person name="Iandolo J.J."/>
        </authorList>
    </citation>
    <scope>NUCLEOTIDE SEQUENCE [LARGE SCALE GENOMIC DNA]</scope>
    <source>
        <strain>NCTC 8325 / PS 47</strain>
    </source>
</reference>
<proteinExistence type="inferred from homology"/>
<evidence type="ECO:0000255" key="1">
    <source>
        <dbReference type="HAMAP-Rule" id="MF_00122"/>
    </source>
</evidence>
<sequence>MTKVTREEVEHIANLARLQISPEETEEMANTLESILDFAKQNDSADTEGVEPTYHVLDLQNVLREDKAIKGIPQELALKNAKETEDGQFKVPTIMNEEDA</sequence>
<organism>
    <name type="scientific">Staphylococcus aureus (strain NCTC 8325 / PS 47)</name>
    <dbReference type="NCBI Taxonomy" id="93061"/>
    <lineage>
        <taxon>Bacteria</taxon>
        <taxon>Bacillati</taxon>
        <taxon>Bacillota</taxon>
        <taxon>Bacilli</taxon>
        <taxon>Bacillales</taxon>
        <taxon>Staphylococcaceae</taxon>
        <taxon>Staphylococcus</taxon>
    </lineage>
</organism>
<comment type="function">
    <text evidence="1">Allows the formation of correctly charged Asn-tRNA(Asn) or Gln-tRNA(Gln) through the transamidation of misacylated Asp-tRNA(Asn) or Glu-tRNA(Gln) in organisms which lack either or both of asparaginyl-tRNA or glutaminyl-tRNA synthetases. The reaction takes place in the presence of glutamine and ATP through an activated phospho-Asp-tRNA(Asn) or phospho-Glu-tRNA(Gln).</text>
</comment>
<comment type="catalytic activity">
    <reaction evidence="1">
        <text>L-glutamyl-tRNA(Gln) + L-glutamine + ATP + H2O = L-glutaminyl-tRNA(Gln) + L-glutamate + ADP + phosphate + H(+)</text>
        <dbReference type="Rhea" id="RHEA:17521"/>
        <dbReference type="Rhea" id="RHEA-COMP:9681"/>
        <dbReference type="Rhea" id="RHEA-COMP:9684"/>
        <dbReference type="ChEBI" id="CHEBI:15377"/>
        <dbReference type="ChEBI" id="CHEBI:15378"/>
        <dbReference type="ChEBI" id="CHEBI:29985"/>
        <dbReference type="ChEBI" id="CHEBI:30616"/>
        <dbReference type="ChEBI" id="CHEBI:43474"/>
        <dbReference type="ChEBI" id="CHEBI:58359"/>
        <dbReference type="ChEBI" id="CHEBI:78520"/>
        <dbReference type="ChEBI" id="CHEBI:78521"/>
        <dbReference type="ChEBI" id="CHEBI:456216"/>
    </reaction>
</comment>
<comment type="catalytic activity">
    <reaction evidence="1">
        <text>L-aspartyl-tRNA(Asn) + L-glutamine + ATP + H2O = L-asparaginyl-tRNA(Asn) + L-glutamate + ADP + phosphate + 2 H(+)</text>
        <dbReference type="Rhea" id="RHEA:14513"/>
        <dbReference type="Rhea" id="RHEA-COMP:9674"/>
        <dbReference type="Rhea" id="RHEA-COMP:9677"/>
        <dbReference type="ChEBI" id="CHEBI:15377"/>
        <dbReference type="ChEBI" id="CHEBI:15378"/>
        <dbReference type="ChEBI" id="CHEBI:29985"/>
        <dbReference type="ChEBI" id="CHEBI:30616"/>
        <dbReference type="ChEBI" id="CHEBI:43474"/>
        <dbReference type="ChEBI" id="CHEBI:58359"/>
        <dbReference type="ChEBI" id="CHEBI:78515"/>
        <dbReference type="ChEBI" id="CHEBI:78516"/>
        <dbReference type="ChEBI" id="CHEBI:456216"/>
    </reaction>
</comment>
<comment type="subunit">
    <text evidence="1">Heterotrimer of A, B and C subunits.</text>
</comment>
<comment type="similarity">
    <text evidence="1">Belongs to the GatC family.</text>
</comment>
<protein>
    <recommendedName>
        <fullName evidence="1">Aspartyl/glutamyl-tRNA(Asn/Gln) amidotransferase subunit C</fullName>
        <shortName evidence="1">Asp/Glu-ADT subunit C</shortName>
        <ecNumber evidence="1">6.3.5.-</ecNumber>
    </recommendedName>
</protein>
<feature type="chain" id="PRO_1000016216" description="Aspartyl/glutamyl-tRNA(Asn/Gln) amidotransferase subunit C">
    <location>
        <begin position="1"/>
        <end position="100"/>
    </location>
</feature>